<sequence length="41" mass="4922">DYDWSLRGPPKCATYGQKCRTWSPPNCCWNLRCKAFRCRPR</sequence>
<accession>P0C200</accession>
<name>TACHC_TACTR</name>
<evidence type="ECO:0000250" key="1"/>
<evidence type="ECO:0000269" key="2">
    <source>
    </source>
</evidence>
<reference key="1">
    <citation type="journal article" date="1999" name="J. Biol. Chem.">
        <title>Horseshoe crab hemocyte-derived antimicrobial polypeptides, tachystatins, with sequence similarity to spider neurotoxins.</title>
        <authorList>
            <person name="Osaki T."/>
            <person name="Omotezako M."/>
            <person name="Nagayama R."/>
            <person name="Hirata M."/>
            <person name="Iwanaga S."/>
            <person name="Kasahara J."/>
            <person name="Hattori J."/>
            <person name="Ito I."/>
            <person name="Sugiyama H."/>
            <person name="Kawabata S."/>
        </authorList>
    </citation>
    <scope>PROTEIN SEQUENCE</scope>
    <scope>TISSUE SPECIFICITY</scope>
</reference>
<feature type="peptide" id="PRO_0000256693" description="Tachystatin-C">
    <location>
        <begin position="1"/>
        <end position="41"/>
    </location>
</feature>
<feature type="disulfide bond" evidence="1">
    <location>
        <begin position="12"/>
        <end position="28"/>
    </location>
</feature>
<feature type="disulfide bond" evidence="1">
    <location>
        <begin position="19"/>
        <end position="33"/>
    </location>
</feature>
<feature type="disulfide bond" evidence="1">
    <location>
        <begin position="27"/>
        <end position="38"/>
    </location>
</feature>
<protein>
    <recommendedName>
        <fullName>Tachystatin-C</fullName>
    </recommendedName>
</protein>
<dbReference type="SMR" id="P0C200"/>
<dbReference type="GO" id="GO:0005576">
    <property type="term" value="C:extracellular region"/>
    <property type="evidence" value="ECO:0007669"/>
    <property type="project" value="UniProtKB-SubCell"/>
</dbReference>
<dbReference type="GO" id="GO:0042742">
    <property type="term" value="P:defense response to bacterium"/>
    <property type="evidence" value="ECO:0007669"/>
    <property type="project" value="UniProtKB-KW"/>
</dbReference>
<dbReference type="GO" id="GO:0050832">
    <property type="term" value="P:defense response to fungus"/>
    <property type="evidence" value="ECO:0007669"/>
    <property type="project" value="UniProtKB-KW"/>
</dbReference>
<dbReference type="GO" id="GO:0031640">
    <property type="term" value="P:killing of cells of another organism"/>
    <property type="evidence" value="ECO:0007669"/>
    <property type="project" value="UniProtKB-KW"/>
</dbReference>
<comment type="function">
    <text>Binds to chitin. Shows strong activity against E.coli (IC(50) is 1.2 ug/ml). Is also very active against S.aureus (IC(50) is 0.8 ug/ml), C.albicans (IC(50) is 0.9 ug/ml) and P.pastoris (IC(50) is 0.3 ug/ml). Binds to chitin (5.2 uM are required to obtain 50% of binding). Causes hemolysis on sheep erythrocytes, probably by forming ion-permeable pores.</text>
</comment>
<comment type="subcellular location">
    <subcellularLocation>
        <location>Secreted</location>
    </subcellularLocation>
</comment>
<comment type="tissue specificity">
    <text evidence="2">Granular hemocytes, small secretory granules.</text>
</comment>
<comment type="domain">
    <text evidence="1">The presence of a 'disulfide through disulfide knot' structurally defines this protein as a knottin.</text>
</comment>
<proteinExistence type="evidence at protein level"/>
<keyword id="KW-0044">Antibiotic</keyword>
<keyword id="KW-0929">Antimicrobial</keyword>
<keyword id="KW-0204">Cytolysis</keyword>
<keyword id="KW-0903">Direct protein sequencing</keyword>
<keyword id="KW-1015">Disulfide bond</keyword>
<keyword id="KW-0295">Fungicide</keyword>
<keyword id="KW-0354">Hemolysis</keyword>
<keyword id="KW-0960">Knottin</keyword>
<keyword id="KW-0964">Secreted</keyword>
<organism>
    <name type="scientific">Tachypleus tridentatus</name>
    <name type="common">Japanese horseshoe crab</name>
    <dbReference type="NCBI Taxonomy" id="6853"/>
    <lineage>
        <taxon>Eukaryota</taxon>
        <taxon>Metazoa</taxon>
        <taxon>Ecdysozoa</taxon>
        <taxon>Arthropoda</taxon>
        <taxon>Chelicerata</taxon>
        <taxon>Merostomata</taxon>
        <taxon>Xiphosura</taxon>
        <taxon>Limulidae</taxon>
        <taxon>Tachypleus</taxon>
    </lineage>
</organism>